<protein>
    <recommendedName>
        <fullName evidence="1">Alanine--tRNA ligase</fullName>
        <ecNumber evidence="1">6.1.1.7</ecNumber>
    </recommendedName>
    <alternativeName>
        <fullName evidence="1">Alanyl-tRNA synthetase</fullName>
        <shortName evidence="1">AlaRS</shortName>
    </alternativeName>
</protein>
<dbReference type="EC" id="6.1.1.7" evidence="1"/>
<dbReference type="EMBL" id="AP009247">
    <property type="protein sequence ID" value="BAF61912.1"/>
    <property type="molecule type" value="Genomic_DNA"/>
</dbReference>
<dbReference type="RefSeq" id="WP_011930181.1">
    <property type="nucleotide sequence ID" value="NC_009465.1"/>
</dbReference>
<dbReference type="SMR" id="A5CVU0"/>
<dbReference type="STRING" id="412965.COSY_0806"/>
<dbReference type="KEGG" id="vok:COSY_0806"/>
<dbReference type="eggNOG" id="COG0013">
    <property type="taxonomic scope" value="Bacteria"/>
</dbReference>
<dbReference type="HOGENOM" id="CLU_004485_1_1_6"/>
<dbReference type="OrthoDB" id="9803884at2"/>
<dbReference type="Proteomes" id="UP000000247">
    <property type="component" value="Chromosome"/>
</dbReference>
<dbReference type="GO" id="GO:0005829">
    <property type="term" value="C:cytosol"/>
    <property type="evidence" value="ECO:0007669"/>
    <property type="project" value="TreeGrafter"/>
</dbReference>
<dbReference type="GO" id="GO:0004813">
    <property type="term" value="F:alanine-tRNA ligase activity"/>
    <property type="evidence" value="ECO:0007669"/>
    <property type="project" value="UniProtKB-UniRule"/>
</dbReference>
<dbReference type="GO" id="GO:0002161">
    <property type="term" value="F:aminoacyl-tRNA deacylase activity"/>
    <property type="evidence" value="ECO:0007669"/>
    <property type="project" value="TreeGrafter"/>
</dbReference>
<dbReference type="GO" id="GO:0005524">
    <property type="term" value="F:ATP binding"/>
    <property type="evidence" value="ECO:0007669"/>
    <property type="project" value="UniProtKB-UniRule"/>
</dbReference>
<dbReference type="GO" id="GO:0000049">
    <property type="term" value="F:tRNA binding"/>
    <property type="evidence" value="ECO:0007669"/>
    <property type="project" value="UniProtKB-KW"/>
</dbReference>
<dbReference type="GO" id="GO:0008270">
    <property type="term" value="F:zinc ion binding"/>
    <property type="evidence" value="ECO:0007669"/>
    <property type="project" value="UniProtKB-UniRule"/>
</dbReference>
<dbReference type="GO" id="GO:0006419">
    <property type="term" value="P:alanyl-tRNA aminoacylation"/>
    <property type="evidence" value="ECO:0007669"/>
    <property type="project" value="UniProtKB-UniRule"/>
</dbReference>
<dbReference type="GO" id="GO:0045892">
    <property type="term" value="P:negative regulation of DNA-templated transcription"/>
    <property type="evidence" value="ECO:0007669"/>
    <property type="project" value="TreeGrafter"/>
</dbReference>
<dbReference type="CDD" id="cd00673">
    <property type="entry name" value="AlaRS_core"/>
    <property type="match status" value="1"/>
</dbReference>
<dbReference type="FunFam" id="2.40.30.130:FF:000001">
    <property type="entry name" value="Alanine--tRNA ligase"/>
    <property type="match status" value="1"/>
</dbReference>
<dbReference type="FunFam" id="3.10.310.40:FF:000001">
    <property type="entry name" value="Alanine--tRNA ligase"/>
    <property type="match status" value="1"/>
</dbReference>
<dbReference type="FunFam" id="3.30.54.20:FF:000001">
    <property type="entry name" value="Alanine--tRNA ligase"/>
    <property type="match status" value="1"/>
</dbReference>
<dbReference type="FunFam" id="3.30.930.10:FF:000004">
    <property type="entry name" value="Alanine--tRNA ligase"/>
    <property type="match status" value="1"/>
</dbReference>
<dbReference type="FunFam" id="3.30.980.10:FF:000004">
    <property type="entry name" value="Alanine--tRNA ligase, cytoplasmic"/>
    <property type="match status" value="1"/>
</dbReference>
<dbReference type="Gene3D" id="2.40.30.130">
    <property type="match status" value="1"/>
</dbReference>
<dbReference type="Gene3D" id="3.10.310.40">
    <property type="match status" value="1"/>
</dbReference>
<dbReference type="Gene3D" id="3.30.54.20">
    <property type="match status" value="1"/>
</dbReference>
<dbReference type="Gene3D" id="6.10.250.550">
    <property type="match status" value="1"/>
</dbReference>
<dbReference type="Gene3D" id="3.30.930.10">
    <property type="entry name" value="Bira Bifunctional Protein, Domain 2"/>
    <property type="match status" value="1"/>
</dbReference>
<dbReference type="Gene3D" id="3.30.980.10">
    <property type="entry name" value="Threonyl-trna Synthetase, Chain A, domain 2"/>
    <property type="match status" value="1"/>
</dbReference>
<dbReference type="HAMAP" id="MF_00036_B">
    <property type="entry name" value="Ala_tRNA_synth_B"/>
    <property type="match status" value="1"/>
</dbReference>
<dbReference type="InterPro" id="IPR045864">
    <property type="entry name" value="aa-tRNA-synth_II/BPL/LPL"/>
</dbReference>
<dbReference type="InterPro" id="IPR002318">
    <property type="entry name" value="Ala-tRNA-lgiase_IIc"/>
</dbReference>
<dbReference type="InterPro" id="IPR018162">
    <property type="entry name" value="Ala-tRNA-ligase_IIc_anticod-bd"/>
</dbReference>
<dbReference type="InterPro" id="IPR018165">
    <property type="entry name" value="Ala-tRNA-synth_IIc_core"/>
</dbReference>
<dbReference type="InterPro" id="IPR018164">
    <property type="entry name" value="Ala-tRNA-synth_IIc_N"/>
</dbReference>
<dbReference type="InterPro" id="IPR050058">
    <property type="entry name" value="Ala-tRNA_ligase"/>
</dbReference>
<dbReference type="InterPro" id="IPR023033">
    <property type="entry name" value="Ala_tRNA_ligase_euk/bac"/>
</dbReference>
<dbReference type="InterPro" id="IPR003156">
    <property type="entry name" value="DHHA1_dom"/>
</dbReference>
<dbReference type="InterPro" id="IPR018163">
    <property type="entry name" value="Thr/Ala-tRNA-synth_IIc_edit"/>
</dbReference>
<dbReference type="InterPro" id="IPR009000">
    <property type="entry name" value="Transl_B-barrel_sf"/>
</dbReference>
<dbReference type="InterPro" id="IPR012947">
    <property type="entry name" value="tRNA_SAD"/>
</dbReference>
<dbReference type="NCBIfam" id="TIGR00344">
    <property type="entry name" value="alaS"/>
    <property type="match status" value="1"/>
</dbReference>
<dbReference type="PANTHER" id="PTHR11777:SF9">
    <property type="entry name" value="ALANINE--TRNA LIGASE, CYTOPLASMIC"/>
    <property type="match status" value="1"/>
</dbReference>
<dbReference type="PANTHER" id="PTHR11777">
    <property type="entry name" value="ALANYL-TRNA SYNTHETASE"/>
    <property type="match status" value="1"/>
</dbReference>
<dbReference type="Pfam" id="PF02272">
    <property type="entry name" value="DHHA1"/>
    <property type="match status" value="1"/>
</dbReference>
<dbReference type="Pfam" id="PF01411">
    <property type="entry name" value="tRNA-synt_2c"/>
    <property type="match status" value="1"/>
</dbReference>
<dbReference type="Pfam" id="PF07973">
    <property type="entry name" value="tRNA_SAD"/>
    <property type="match status" value="1"/>
</dbReference>
<dbReference type="PRINTS" id="PR00980">
    <property type="entry name" value="TRNASYNTHALA"/>
</dbReference>
<dbReference type="SMART" id="SM00863">
    <property type="entry name" value="tRNA_SAD"/>
    <property type="match status" value="1"/>
</dbReference>
<dbReference type="SUPFAM" id="SSF55681">
    <property type="entry name" value="Class II aaRS and biotin synthetases"/>
    <property type="match status" value="1"/>
</dbReference>
<dbReference type="SUPFAM" id="SSF101353">
    <property type="entry name" value="Putative anticodon-binding domain of alanyl-tRNA synthetase (AlaRS)"/>
    <property type="match status" value="1"/>
</dbReference>
<dbReference type="SUPFAM" id="SSF55186">
    <property type="entry name" value="ThrRS/AlaRS common domain"/>
    <property type="match status" value="1"/>
</dbReference>
<dbReference type="SUPFAM" id="SSF50447">
    <property type="entry name" value="Translation proteins"/>
    <property type="match status" value="1"/>
</dbReference>
<dbReference type="PROSITE" id="PS50860">
    <property type="entry name" value="AA_TRNA_LIGASE_II_ALA"/>
    <property type="match status" value="1"/>
</dbReference>
<evidence type="ECO:0000255" key="1">
    <source>
        <dbReference type="HAMAP-Rule" id="MF_00036"/>
    </source>
</evidence>
<organism>
    <name type="scientific">Vesicomyosocius okutanii subsp. Calyptogena okutanii (strain HA)</name>
    <dbReference type="NCBI Taxonomy" id="412965"/>
    <lineage>
        <taxon>Bacteria</taxon>
        <taxon>Pseudomonadati</taxon>
        <taxon>Pseudomonadota</taxon>
        <taxon>Gammaproteobacteria</taxon>
        <taxon>Candidatus Pseudothioglobaceae</taxon>
        <taxon>Candidatus Vesicomyosocius</taxon>
    </lineage>
</organism>
<accession>A5CVU0</accession>
<name>SYA_VESOH</name>
<gene>
    <name evidence="1" type="primary">alaS</name>
    <name type="ordered locus">COSY_0806</name>
</gene>
<keyword id="KW-0030">Aminoacyl-tRNA synthetase</keyword>
<keyword id="KW-0067">ATP-binding</keyword>
<keyword id="KW-0963">Cytoplasm</keyword>
<keyword id="KW-0436">Ligase</keyword>
<keyword id="KW-0479">Metal-binding</keyword>
<keyword id="KW-0547">Nucleotide-binding</keyword>
<keyword id="KW-0648">Protein biosynthesis</keyword>
<keyword id="KW-1185">Reference proteome</keyword>
<keyword id="KW-0694">RNA-binding</keyword>
<keyword id="KW-0820">tRNA-binding</keyword>
<keyword id="KW-0862">Zinc</keyword>
<proteinExistence type="inferred from homology"/>
<reference key="1">
    <citation type="journal article" date="2007" name="Curr. Biol.">
        <title>Reduced genome of the thioautotrophic intracellular symbiont in a deep-sea clam, Calyptogena okutanii.</title>
        <authorList>
            <person name="Kuwahara H."/>
            <person name="Yoshida T."/>
            <person name="Takaki Y."/>
            <person name="Shimamura S."/>
            <person name="Nishi S."/>
            <person name="Harada M."/>
            <person name="Matsuyama K."/>
            <person name="Takishita K."/>
            <person name="Kawato M."/>
            <person name="Uematsu K."/>
            <person name="Fujiwara Y."/>
            <person name="Sato T."/>
            <person name="Kato C."/>
            <person name="Kitagawa M."/>
            <person name="Kato I."/>
            <person name="Maruyama T."/>
        </authorList>
    </citation>
    <scope>NUCLEOTIDE SEQUENCE [LARGE SCALE GENOMIC DNA]</scope>
    <source>
        <strain>HA</strain>
    </source>
</reference>
<sequence>MKTAQIRQKFLDYFESKGHIIESSASLIPHNDKTLLFVNAGMVPFKDVFSGIEKRPYTRAVSVQRCARAGGKHNDLENVGYTARHHTFFEMLGNFSFGDYFKREAIHYAWEFLTKELNLPKKNLWVSVFDQDNEAEDIWVNEIGFPKNRISRCGAKDNFWQMGDTGPCGPSSEIFYDHGEHIAGGPPGHANEDGDRYIEIWNLVFTEFDKQEDGYLKPLAVPCVDTGMGLERLVAVLQHKNNNYDTDGFQNLVKAVVNLTPKFNNIKDNNASVRVITDHIRSAAFMIVDGVIPSNEGRGYVLRRIIRRGIRHGHKMGIGKVFFYRLASILALEFKDVYPELEQALSKVEKVLKREEQRFSKTLDQGMSILEEVITNFKGSEINGKIVFKLYDTYGFPVDLTSDIARERNLTIDMSGFEVEMTKQRDRARQASDFKISEKGVDIAERTEFLGYKQLKNVSLIQAIINNNELVEKIEVGDHGIVVLAQSSFYAESGGQIGDKGILSNMQVEFRVDHTNKQKSGAFEHHGVLNKGVLKVSDAVQANVDKKSRKCIARNHSATHLLHAALHIVLGKAVMQKGSLVGSEKLRFDFSYDKVIVKSDLERIESIVNRKILGNTKVYTDITNIEGAKKKGAMTLFGKKYGDTVRVLTMGKNEFSVELCGGTHVNQLGDIGLFRIISESSVSAGVRRIEALTGYDAYQFDNRIQNSLNKIAQMTRSSNTEVVGKVTQLIKQQKELEKQIATFQKKIANNQGDDLIVQAQEVKGIKLLSTVVEGVTSKDLRNIVDKLKDKLSSAVIVLAVVINDKVSLVTGVTKDLTKQYQARKILNHVAKQIGGKGDGRSDMAQGGGTKPECLIKALASVKSLI</sequence>
<feature type="chain" id="PRO_0000347859" description="Alanine--tRNA ligase">
    <location>
        <begin position="1"/>
        <end position="865"/>
    </location>
</feature>
<feature type="binding site" evidence="1">
    <location>
        <position position="556"/>
    </location>
    <ligand>
        <name>Zn(2+)</name>
        <dbReference type="ChEBI" id="CHEBI:29105"/>
    </ligand>
</feature>
<feature type="binding site" evidence="1">
    <location>
        <position position="560"/>
    </location>
    <ligand>
        <name>Zn(2+)</name>
        <dbReference type="ChEBI" id="CHEBI:29105"/>
    </ligand>
</feature>
<feature type="binding site" evidence="1">
    <location>
        <position position="660"/>
    </location>
    <ligand>
        <name>Zn(2+)</name>
        <dbReference type="ChEBI" id="CHEBI:29105"/>
    </ligand>
</feature>
<feature type="binding site" evidence="1">
    <location>
        <position position="664"/>
    </location>
    <ligand>
        <name>Zn(2+)</name>
        <dbReference type="ChEBI" id="CHEBI:29105"/>
    </ligand>
</feature>
<comment type="function">
    <text evidence="1">Catalyzes the attachment of alanine to tRNA(Ala) in a two-step reaction: alanine is first activated by ATP to form Ala-AMP and then transferred to the acceptor end of tRNA(Ala). Also edits incorrectly charged Ser-tRNA(Ala) and Gly-tRNA(Ala) via its editing domain.</text>
</comment>
<comment type="catalytic activity">
    <reaction evidence="1">
        <text>tRNA(Ala) + L-alanine + ATP = L-alanyl-tRNA(Ala) + AMP + diphosphate</text>
        <dbReference type="Rhea" id="RHEA:12540"/>
        <dbReference type="Rhea" id="RHEA-COMP:9657"/>
        <dbReference type="Rhea" id="RHEA-COMP:9923"/>
        <dbReference type="ChEBI" id="CHEBI:30616"/>
        <dbReference type="ChEBI" id="CHEBI:33019"/>
        <dbReference type="ChEBI" id="CHEBI:57972"/>
        <dbReference type="ChEBI" id="CHEBI:78442"/>
        <dbReference type="ChEBI" id="CHEBI:78497"/>
        <dbReference type="ChEBI" id="CHEBI:456215"/>
        <dbReference type="EC" id="6.1.1.7"/>
    </reaction>
</comment>
<comment type="cofactor">
    <cofactor evidence="1">
        <name>Zn(2+)</name>
        <dbReference type="ChEBI" id="CHEBI:29105"/>
    </cofactor>
    <text evidence="1">Binds 1 zinc ion per subunit.</text>
</comment>
<comment type="subcellular location">
    <subcellularLocation>
        <location evidence="1">Cytoplasm</location>
    </subcellularLocation>
</comment>
<comment type="domain">
    <text evidence="1">Consists of three domains; the N-terminal catalytic domain, the editing domain and the C-terminal C-Ala domain. The editing domain removes incorrectly charged amino acids, while the C-Ala domain, along with tRNA(Ala), serves as a bridge to cooperatively bring together the editing and aminoacylation centers thus stimulating deacylation of misacylated tRNAs.</text>
</comment>
<comment type="similarity">
    <text evidence="1">Belongs to the class-II aminoacyl-tRNA synthetase family.</text>
</comment>